<feature type="chain" id="PRO_0000309716" description="Hydroxyacylglutathione hydrolase">
    <location>
        <begin position="1"/>
        <end position="255"/>
    </location>
</feature>
<feature type="binding site" evidence="1">
    <location>
        <position position="59"/>
    </location>
    <ligand>
        <name>Zn(2+)</name>
        <dbReference type="ChEBI" id="CHEBI:29105"/>
        <label>1</label>
    </ligand>
</feature>
<feature type="binding site" evidence="1">
    <location>
        <position position="61"/>
    </location>
    <ligand>
        <name>Zn(2+)</name>
        <dbReference type="ChEBI" id="CHEBI:29105"/>
        <label>1</label>
    </ligand>
</feature>
<feature type="binding site" evidence="1">
    <location>
        <position position="63"/>
    </location>
    <ligand>
        <name>Zn(2+)</name>
        <dbReference type="ChEBI" id="CHEBI:29105"/>
        <label>2</label>
    </ligand>
</feature>
<feature type="binding site" evidence="1">
    <location>
        <position position="64"/>
    </location>
    <ligand>
        <name>Zn(2+)</name>
        <dbReference type="ChEBI" id="CHEBI:29105"/>
        <label>2</label>
    </ligand>
</feature>
<feature type="binding site" evidence="1">
    <location>
        <position position="118"/>
    </location>
    <ligand>
        <name>Zn(2+)</name>
        <dbReference type="ChEBI" id="CHEBI:29105"/>
        <label>1</label>
    </ligand>
</feature>
<feature type="binding site" evidence="1">
    <location>
        <position position="144"/>
    </location>
    <ligand>
        <name>Zn(2+)</name>
        <dbReference type="ChEBI" id="CHEBI:29105"/>
        <label>1</label>
    </ligand>
</feature>
<feature type="binding site" evidence="1">
    <location>
        <position position="144"/>
    </location>
    <ligand>
        <name>Zn(2+)</name>
        <dbReference type="ChEBI" id="CHEBI:29105"/>
        <label>2</label>
    </ligand>
</feature>
<feature type="binding site" evidence="1">
    <location>
        <position position="182"/>
    </location>
    <ligand>
        <name>Zn(2+)</name>
        <dbReference type="ChEBI" id="CHEBI:29105"/>
        <label>2</label>
    </ligand>
</feature>
<evidence type="ECO:0000255" key="1">
    <source>
        <dbReference type="HAMAP-Rule" id="MF_01374"/>
    </source>
</evidence>
<comment type="function">
    <text evidence="1">Thiolesterase that catalyzes the hydrolysis of S-D-lactoyl-glutathione to form glutathione and D-lactic acid.</text>
</comment>
<comment type="catalytic activity">
    <reaction evidence="1">
        <text>an S-(2-hydroxyacyl)glutathione + H2O = a 2-hydroxy carboxylate + glutathione + H(+)</text>
        <dbReference type="Rhea" id="RHEA:21864"/>
        <dbReference type="ChEBI" id="CHEBI:15377"/>
        <dbReference type="ChEBI" id="CHEBI:15378"/>
        <dbReference type="ChEBI" id="CHEBI:57925"/>
        <dbReference type="ChEBI" id="CHEBI:58896"/>
        <dbReference type="ChEBI" id="CHEBI:71261"/>
        <dbReference type="EC" id="3.1.2.6"/>
    </reaction>
</comment>
<comment type="cofactor">
    <cofactor evidence="1">
        <name>Zn(2+)</name>
        <dbReference type="ChEBI" id="CHEBI:29105"/>
    </cofactor>
    <text evidence="1">Binds 2 Zn(2+) ions per subunit.</text>
</comment>
<comment type="pathway">
    <text evidence="1">Secondary metabolite metabolism; methylglyoxal degradation; (R)-lactate from methylglyoxal: step 2/2.</text>
</comment>
<comment type="subunit">
    <text evidence="1">Monomer.</text>
</comment>
<comment type="similarity">
    <text evidence="1">Belongs to the metallo-beta-lactamase superfamily. Glyoxalase II family.</text>
</comment>
<dbReference type="EC" id="3.1.2.6" evidence="1"/>
<dbReference type="EMBL" id="CT971583">
    <property type="protein sequence ID" value="CAK23120.1"/>
    <property type="molecule type" value="Genomic_DNA"/>
</dbReference>
<dbReference type="SMR" id="A5GJK5"/>
<dbReference type="STRING" id="32051.SynWH7803_0694"/>
<dbReference type="KEGG" id="syx:SynWH7803_0694"/>
<dbReference type="eggNOG" id="COG0491">
    <property type="taxonomic scope" value="Bacteria"/>
</dbReference>
<dbReference type="HOGENOM" id="CLU_030571_4_1_3"/>
<dbReference type="OrthoDB" id="9802897at2"/>
<dbReference type="UniPathway" id="UPA00619">
    <property type="reaction ID" value="UER00676"/>
</dbReference>
<dbReference type="Proteomes" id="UP000001566">
    <property type="component" value="Chromosome"/>
</dbReference>
<dbReference type="GO" id="GO:0004416">
    <property type="term" value="F:hydroxyacylglutathione hydrolase activity"/>
    <property type="evidence" value="ECO:0007669"/>
    <property type="project" value="UniProtKB-UniRule"/>
</dbReference>
<dbReference type="GO" id="GO:0046872">
    <property type="term" value="F:metal ion binding"/>
    <property type="evidence" value="ECO:0007669"/>
    <property type="project" value="UniProtKB-KW"/>
</dbReference>
<dbReference type="GO" id="GO:0019243">
    <property type="term" value="P:methylglyoxal catabolic process to D-lactate via S-lactoyl-glutathione"/>
    <property type="evidence" value="ECO:0007669"/>
    <property type="project" value="InterPro"/>
</dbReference>
<dbReference type="CDD" id="cd07723">
    <property type="entry name" value="hydroxyacylglutathione_hydrolase_MBL-fold"/>
    <property type="match status" value="1"/>
</dbReference>
<dbReference type="Gene3D" id="3.60.15.10">
    <property type="entry name" value="Ribonuclease Z/Hydroxyacylglutathione hydrolase-like"/>
    <property type="match status" value="1"/>
</dbReference>
<dbReference type="HAMAP" id="MF_01374">
    <property type="entry name" value="Glyoxalase_2"/>
    <property type="match status" value="1"/>
</dbReference>
<dbReference type="InterPro" id="IPR035680">
    <property type="entry name" value="Clx_II_MBL"/>
</dbReference>
<dbReference type="InterPro" id="IPR050110">
    <property type="entry name" value="Glyoxalase_II_hydrolase"/>
</dbReference>
<dbReference type="InterPro" id="IPR032282">
    <property type="entry name" value="HAGH_C"/>
</dbReference>
<dbReference type="InterPro" id="IPR017782">
    <property type="entry name" value="Hydroxyacylglutathione_Hdrlase"/>
</dbReference>
<dbReference type="InterPro" id="IPR001279">
    <property type="entry name" value="Metallo-B-lactamas"/>
</dbReference>
<dbReference type="InterPro" id="IPR036866">
    <property type="entry name" value="RibonucZ/Hydroxyglut_hydro"/>
</dbReference>
<dbReference type="NCBIfam" id="TIGR03413">
    <property type="entry name" value="GSH_gloB"/>
    <property type="match status" value="1"/>
</dbReference>
<dbReference type="PANTHER" id="PTHR43705">
    <property type="entry name" value="HYDROXYACYLGLUTATHIONE HYDROLASE"/>
    <property type="match status" value="1"/>
</dbReference>
<dbReference type="PANTHER" id="PTHR43705:SF1">
    <property type="entry name" value="HYDROXYACYLGLUTATHIONE HYDROLASE GLOB"/>
    <property type="match status" value="1"/>
</dbReference>
<dbReference type="Pfam" id="PF16123">
    <property type="entry name" value="HAGH_C"/>
    <property type="match status" value="1"/>
</dbReference>
<dbReference type="Pfam" id="PF00753">
    <property type="entry name" value="Lactamase_B"/>
    <property type="match status" value="1"/>
</dbReference>
<dbReference type="PIRSF" id="PIRSF005457">
    <property type="entry name" value="Glx"/>
    <property type="match status" value="1"/>
</dbReference>
<dbReference type="SMART" id="SM00849">
    <property type="entry name" value="Lactamase_B"/>
    <property type="match status" value="1"/>
</dbReference>
<dbReference type="SUPFAM" id="SSF56281">
    <property type="entry name" value="Metallo-hydrolase/oxidoreductase"/>
    <property type="match status" value="1"/>
</dbReference>
<reference key="1">
    <citation type="submission" date="2006-05" db="EMBL/GenBank/DDBJ databases">
        <authorList>
            <consortium name="Genoscope"/>
        </authorList>
    </citation>
    <scope>NUCLEOTIDE SEQUENCE [LARGE SCALE GENOMIC DNA]</scope>
    <source>
        <strain>WH7803</strain>
    </source>
</reference>
<proteinExistence type="inferred from homology"/>
<name>GLO2_SYNPW</name>
<organism>
    <name type="scientific">Synechococcus sp. (strain WH7803)</name>
    <dbReference type="NCBI Taxonomy" id="32051"/>
    <lineage>
        <taxon>Bacteria</taxon>
        <taxon>Bacillati</taxon>
        <taxon>Cyanobacteriota</taxon>
        <taxon>Cyanophyceae</taxon>
        <taxon>Synechococcales</taxon>
        <taxon>Synechococcaceae</taxon>
        <taxon>Synechococcus</taxon>
    </lineage>
</organism>
<keyword id="KW-0378">Hydrolase</keyword>
<keyword id="KW-0479">Metal-binding</keyword>
<keyword id="KW-1185">Reference proteome</keyword>
<keyword id="KW-0862">Zinc</keyword>
<accession>A5GJK5</accession>
<gene>
    <name evidence="1" type="primary">gloB</name>
    <name type="ordered locus">SynWH7803_0694</name>
</gene>
<sequence>MSLTLERGAIAPLPVLQDNIIWIWSCGSEAVVVDPAVAEPVIEALQQKGLTLIAVLQTHHHADHIGGTPDLLRQWPDAAVIASGQDRGRIPFQTQPVAAGTRFTLLGVPVDVIDVRAHTSAHLAFFLPEGCSPGGHPPALFCGDTLFSGGCGRLFEGTPDDMHRALQTLATLPESTRIYCAHEYTEGNLRWAHALQPEDRAIKARLEDVIALRTQHKLTIPSTLAEEHRSNLFLRAQSAAELGRLRQLKDDWKGF</sequence>
<protein>
    <recommendedName>
        <fullName evidence="1">Hydroxyacylglutathione hydrolase</fullName>
        <ecNumber evidence="1">3.1.2.6</ecNumber>
    </recommendedName>
    <alternativeName>
        <fullName evidence="1">Glyoxalase II</fullName>
        <shortName evidence="1">Glx II</shortName>
    </alternativeName>
</protein>